<reference key="1">
    <citation type="journal article" date="1997" name="J. Bacteriol.">
        <title>Complete genome sequence of Methanobacterium thermoautotrophicum deltaH: functional analysis and comparative genomics.</title>
        <authorList>
            <person name="Smith D.R."/>
            <person name="Doucette-Stamm L.A."/>
            <person name="Deloughery C."/>
            <person name="Lee H.-M."/>
            <person name="Dubois J."/>
            <person name="Aldredge T."/>
            <person name="Bashirzadeh R."/>
            <person name="Blakely D."/>
            <person name="Cook R."/>
            <person name="Gilbert K."/>
            <person name="Harrison D."/>
            <person name="Hoang L."/>
            <person name="Keagle P."/>
            <person name="Lumm W."/>
            <person name="Pothier B."/>
            <person name="Qiu D."/>
            <person name="Spadafora R."/>
            <person name="Vicare R."/>
            <person name="Wang Y."/>
            <person name="Wierzbowski J."/>
            <person name="Gibson R."/>
            <person name="Jiwani N."/>
            <person name="Caruso A."/>
            <person name="Bush D."/>
            <person name="Safer H."/>
            <person name="Patwell D."/>
            <person name="Prabhakar S."/>
            <person name="McDougall S."/>
            <person name="Shimer G."/>
            <person name="Goyal A."/>
            <person name="Pietrovski S."/>
            <person name="Church G.M."/>
            <person name="Daniels C.J."/>
            <person name="Mao J.-I."/>
            <person name="Rice P."/>
            <person name="Noelling J."/>
            <person name="Reeve J.N."/>
        </authorList>
    </citation>
    <scope>NUCLEOTIDE SEQUENCE [LARGE SCALE GENOMIC DNA]</scope>
    <source>
        <strain>ATCC 29096 / DSM 1053 / JCM 10044 / NBRC 100330 / Delta H</strain>
    </source>
</reference>
<dbReference type="EMBL" id="AE000666">
    <property type="protein sequence ID" value="AAB84643.1"/>
    <property type="molecule type" value="Genomic_DNA"/>
</dbReference>
<dbReference type="PIR" id="B69049">
    <property type="entry name" value="B69049"/>
</dbReference>
<dbReference type="SMR" id="O26240"/>
<dbReference type="STRING" id="187420.MTH_137"/>
<dbReference type="PaxDb" id="187420-MTH_137"/>
<dbReference type="EnsemblBacteria" id="AAB84643">
    <property type="protein sequence ID" value="AAB84643"/>
    <property type="gene ID" value="MTH_137"/>
</dbReference>
<dbReference type="KEGG" id="mth:MTH_137"/>
<dbReference type="HOGENOM" id="CLU_134280_4_0_2"/>
<dbReference type="InParanoid" id="O26240"/>
<dbReference type="Proteomes" id="UP000005223">
    <property type="component" value="Chromosome"/>
</dbReference>
<dbReference type="GO" id="GO:0005886">
    <property type="term" value="C:plasma membrane"/>
    <property type="evidence" value="ECO:0007669"/>
    <property type="project" value="UniProtKB-SubCell"/>
</dbReference>
<dbReference type="InterPro" id="IPR019277">
    <property type="entry name" value="DUF2304"/>
</dbReference>
<dbReference type="Pfam" id="PF10066">
    <property type="entry name" value="DUF2304"/>
    <property type="match status" value="1"/>
</dbReference>
<name>Y137_METTH</name>
<proteinExistence type="predicted"/>
<evidence type="ECO:0000255" key="1"/>
<evidence type="ECO:0000305" key="2"/>
<accession>O26240</accession>
<sequence length="116" mass="13110">MRSSVGEFMIYQVIGTVIGIAGIIVSFARFRESRTSPGGLLLWLILWVSVILFSLNPPFSTRIANLLGIGRGLDFLLIIGILGAYYLLFRIYLMVDRIQQDITELVHEIALREHDD</sequence>
<protein>
    <recommendedName>
        <fullName>Uncharacterized protein MTH_137</fullName>
    </recommendedName>
</protein>
<comment type="subcellular location">
    <subcellularLocation>
        <location evidence="2">Cell membrane</location>
        <topology evidence="2">Multi-pass membrane protein</topology>
    </subcellularLocation>
</comment>
<comment type="similarity">
    <text evidence="2">To M.jannaschii MJ1580.</text>
</comment>
<gene>
    <name type="ordered locus">MTH_137</name>
</gene>
<organism>
    <name type="scientific">Methanothermobacter thermautotrophicus (strain ATCC 29096 / DSM 1053 / JCM 10044 / NBRC 100330 / Delta H)</name>
    <name type="common">Methanobacterium thermoautotrophicum</name>
    <dbReference type="NCBI Taxonomy" id="187420"/>
    <lineage>
        <taxon>Archaea</taxon>
        <taxon>Methanobacteriati</taxon>
        <taxon>Methanobacteriota</taxon>
        <taxon>Methanomada group</taxon>
        <taxon>Methanobacteria</taxon>
        <taxon>Methanobacteriales</taxon>
        <taxon>Methanobacteriaceae</taxon>
        <taxon>Methanothermobacter</taxon>
    </lineage>
</organism>
<keyword id="KW-1003">Cell membrane</keyword>
<keyword id="KW-0472">Membrane</keyword>
<keyword id="KW-1185">Reference proteome</keyword>
<keyword id="KW-0812">Transmembrane</keyword>
<keyword id="KW-1133">Transmembrane helix</keyword>
<feature type="chain" id="PRO_0000107426" description="Uncharacterized protein MTH_137">
    <location>
        <begin position="1"/>
        <end position="116"/>
    </location>
</feature>
<feature type="transmembrane region" description="Helical" evidence="1">
    <location>
        <begin position="8"/>
        <end position="28"/>
    </location>
</feature>
<feature type="transmembrane region" description="Helical" evidence="1">
    <location>
        <begin position="39"/>
        <end position="59"/>
    </location>
</feature>
<feature type="transmembrane region" description="Helical" evidence="1">
    <location>
        <begin position="75"/>
        <end position="95"/>
    </location>
</feature>